<organism>
    <name type="scientific">Rhizobium leguminosarum bv. trifolii (strain WSM2304)</name>
    <dbReference type="NCBI Taxonomy" id="395492"/>
    <lineage>
        <taxon>Bacteria</taxon>
        <taxon>Pseudomonadati</taxon>
        <taxon>Pseudomonadota</taxon>
        <taxon>Alphaproteobacteria</taxon>
        <taxon>Hyphomicrobiales</taxon>
        <taxon>Rhizobiaceae</taxon>
        <taxon>Rhizobium/Agrobacterium group</taxon>
        <taxon>Rhizobium</taxon>
    </lineage>
</organism>
<reference key="1">
    <citation type="journal article" date="2010" name="Stand. Genomic Sci.">
        <title>Complete genome sequence of Rhizobium leguminosarum bv trifolii strain WSM2304, an effective microsymbiont of the South American clover Trifolium polymorphum.</title>
        <authorList>
            <person name="Reeve W."/>
            <person name="O'Hara G."/>
            <person name="Chain P."/>
            <person name="Ardley J."/>
            <person name="Brau L."/>
            <person name="Nandesena K."/>
            <person name="Tiwari R."/>
            <person name="Malfatti S."/>
            <person name="Kiss H."/>
            <person name="Lapidus A."/>
            <person name="Copeland A."/>
            <person name="Nolan M."/>
            <person name="Land M."/>
            <person name="Ivanova N."/>
            <person name="Mavromatis K."/>
            <person name="Markowitz V."/>
            <person name="Kyrpides N."/>
            <person name="Melino V."/>
            <person name="Denton M."/>
            <person name="Yates R."/>
            <person name="Howieson J."/>
        </authorList>
    </citation>
    <scope>NUCLEOTIDE SEQUENCE [LARGE SCALE GENOMIC DNA]</scope>
    <source>
        <strain>WSM2304</strain>
    </source>
</reference>
<protein>
    <recommendedName>
        <fullName evidence="1">Succinyl-diaminopimelate desuccinylase</fullName>
        <shortName evidence="1">SDAP desuccinylase</shortName>
        <ecNumber evidence="1">3.5.1.18</ecNumber>
    </recommendedName>
    <alternativeName>
        <fullName evidence="1">N-succinyl-LL-2,6-diaminoheptanedioate amidohydrolase</fullName>
    </alternativeName>
</protein>
<name>DAPE_RHILW</name>
<proteinExistence type="inferred from homology"/>
<keyword id="KW-0028">Amino-acid biosynthesis</keyword>
<keyword id="KW-0170">Cobalt</keyword>
<keyword id="KW-0220">Diaminopimelate biosynthesis</keyword>
<keyword id="KW-0378">Hydrolase</keyword>
<keyword id="KW-0457">Lysine biosynthesis</keyword>
<keyword id="KW-0479">Metal-binding</keyword>
<keyword id="KW-1185">Reference proteome</keyword>
<keyword id="KW-0862">Zinc</keyword>
<comment type="function">
    <text evidence="1">Catalyzes the hydrolysis of N-succinyl-L,L-diaminopimelic acid (SDAP), forming succinate and LL-2,6-diaminopimelate (DAP), an intermediate involved in the bacterial biosynthesis of lysine and meso-diaminopimelic acid, an essential component of bacterial cell walls.</text>
</comment>
<comment type="catalytic activity">
    <reaction evidence="1">
        <text>N-succinyl-(2S,6S)-2,6-diaminopimelate + H2O = (2S,6S)-2,6-diaminopimelate + succinate</text>
        <dbReference type="Rhea" id="RHEA:22608"/>
        <dbReference type="ChEBI" id="CHEBI:15377"/>
        <dbReference type="ChEBI" id="CHEBI:30031"/>
        <dbReference type="ChEBI" id="CHEBI:57609"/>
        <dbReference type="ChEBI" id="CHEBI:58087"/>
        <dbReference type="EC" id="3.5.1.18"/>
    </reaction>
</comment>
<comment type="cofactor">
    <cofactor evidence="1">
        <name>Zn(2+)</name>
        <dbReference type="ChEBI" id="CHEBI:29105"/>
    </cofactor>
    <cofactor evidence="1">
        <name>Co(2+)</name>
        <dbReference type="ChEBI" id="CHEBI:48828"/>
    </cofactor>
    <text evidence="1">Binds 2 Zn(2+) or Co(2+) ions per subunit.</text>
</comment>
<comment type="pathway">
    <text evidence="1">Amino-acid biosynthesis; L-lysine biosynthesis via DAP pathway; LL-2,6-diaminopimelate from (S)-tetrahydrodipicolinate (succinylase route): step 3/3.</text>
</comment>
<comment type="subunit">
    <text evidence="1">Homodimer.</text>
</comment>
<comment type="similarity">
    <text evidence="1">Belongs to the peptidase M20A family. DapE subfamily.</text>
</comment>
<gene>
    <name evidence="1" type="primary">dapE</name>
    <name type="ordered locus">Rleg2_0061</name>
</gene>
<feature type="chain" id="PRO_0000375680" description="Succinyl-diaminopimelate desuccinylase">
    <location>
        <begin position="1"/>
        <end position="397"/>
    </location>
</feature>
<feature type="active site" evidence="1">
    <location>
        <position position="75"/>
    </location>
</feature>
<feature type="active site" description="Proton acceptor" evidence="1">
    <location>
        <position position="140"/>
    </location>
</feature>
<feature type="binding site" evidence="1">
    <location>
        <position position="73"/>
    </location>
    <ligand>
        <name>Zn(2+)</name>
        <dbReference type="ChEBI" id="CHEBI:29105"/>
        <label>1</label>
    </ligand>
</feature>
<feature type="binding site" evidence="1">
    <location>
        <position position="106"/>
    </location>
    <ligand>
        <name>Zn(2+)</name>
        <dbReference type="ChEBI" id="CHEBI:29105"/>
        <label>1</label>
    </ligand>
</feature>
<feature type="binding site" evidence="1">
    <location>
        <position position="106"/>
    </location>
    <ligand>
        <name>Zn(2+)</name>
        <dbReference type="ChEBI" id="CHEBI:29105"/>
        <label>2</label>
    </ligand>
</feature>
<feature type="binding site" evidence="1">
    <location>
        <position position="141"/>
    </location>
    <ligand>
        <name>Zn(2+)</name>
        <dbReference type="ChEBI" id="CHEBI:29105"/>
        <label>2</label>
    </ligand>
</feature>
<feature type="binding site" evidence="1">
    <location>
        <position position="169"/>
    </location>
    <ligand>
        <name>Zn(2+)</name>
        <dbReference type="ChEBI" id="CHEBI:29105"/>
        <label>1</label>
    </ligand>
</feature>
<feature type="binding site" evidence="1">
    <location>
        <position position="366"/>
    </location>
    <ligand>
        <name>Zn(2+)</name>
        <dbReference type="ChEBI" id="CHEBI:29105"/>
        <label>2</label>
    </ligand>
</feature>
<evidence type="ECO:0000255" key="1">
    <source>
        <dbReference type="HAMAP-Rule" id="MF_01690"/>
    </source>
</evidence>
<sequence>MTATDPVANLQTLIRCPSVTPAEGGALSALDAMLAPLGFTVDKVKASEAGTADIENLYARLGKDGPHLMFAGHTDVVPVGDEADWTHPPFAAEISKGELFGRGAVDMKGGIACFIAAVARHIEKNGPPKGSISFLITGDEEGPAINGTIKLLRWAAERGERWDACLVGEPTNPDRLGDMIKIGRRGSLSGKITVHGVQGHAAYPHLADNPVRGMLQLTQALMDPPFDGGTDDFQPSNLEVTTVDVGNPATNVIPAKASASFNIRFNDSWTAETLRAEILRRLDAAAGDGRLRPGREPVKYDIVWADRPSHVFLTRNNALIASLSSAVEGVIGRSPKLSTTGGTSDARFIKDYCPVVEFGLVGQTMHMVDERVAVSDLETLTAIYETFIAHWFANAGA</sequence>
<dbReference type="EC" id="3.5.1.18" evidence="1"/>
<dbReference type="EMBL" id="CP001191">
    <property type="protein sequence ID" value="ACI53364.1"/>
    <property type="molecule type" value="Genomic_DNA"/>
</dbReference>
<dbReference type="RefSeq" id="WP_012556407.1">
    <property type="nucleotide sequence ID" value="NC_011369.1"/>
</dbReference>
<dbReference type="SMR" id="B5ZN23"/>
<dbReference type="STRING" id="395492.Rleg2_0061"/>
<dbReference type="KEGG" id="rlt:Rleg2_0061"/>
<dbReference type="eggNOG" id="COG0624">
    <property type="taxonomic scope" value="Bacteria"/>
</dbReference>
<dbReference type="HOGENOM" id="CLU_021802_4_0_5"/>
<dbReference type="UniPathway" id="UPA00034">
    <property type="reaction ID" value="UER00021"/>
</dbReference>
<dbReference type="Proteomes" id="UP000008330">
    <property type="component" value="Chromosome"/>
</dbReference>
<dbReference type="GO" id="GO:0008777">
    <property type="term" value="F:acetylornithine deacetylase activity"/>
    <property type="evidence" value="ECO:0007669"/>
    <property type="project" value="TreeGrafter"/>
</dbReference>
<dbReference type="GO" id="GO:0050897">
    <property type="term" value="F:cobalt ion binding"/>
    <property type="evidence" value="ECO:0007669"/>
    <property type="project" value="UniProtKB-UniRule"/>
</dbReference>
<dbReference type="GO" id="GO:0009014">
    <property type="term" value="F:succinyl-diaminopimelate desuccinylase activity"/>
    <property type="evidence" value="ECO:0007669"/>
    <property type="project" value="UniProtKB-UniRule"/>
</dbReference>
<dbReference type="GO" id="GO:0008270">
    <property type="term" value="F:zinc ion binding"/>
    <property type="evidence" value="ECO:0007669"/>
    <property type="project" value="UniProtKB-UniRule"/>
</dbReference>
<dbReference type="GO" id="GO:0019877">
    <property type="term" value="P:diaminopimelate biosynthetic process"/>
    <property type="evidence" value="ECO:0007669"/>
    <property type="project" value="UniProtKB-UniRule"/>
</dbReference>
<dbReference type="GO" id="GO:0006526">
    <property type="term" value="P:L-arginine biosynthetic process"/>
    <property type="evidence" value="ECO:0007669"/>
    <property type="project" value="TreeGrafter"/>
</dbReference>
<dbReference type="GO" id="GO:0009089">
    <property type="term" value="P:lysine biosynthetic process via diaminopimelate"/>
    <property type="evidence" value="ECO:0007669"/>
    <property type="project" value="UniProtKB-UniRule"/>
</dbReference>
<dbReference type="CDD" id="cd03891">
    <property type="entry name" value="M20_DapE_proteobac"/>
    <property type="match status" value="1"/>
</dbReference>
<dbReference type="Gene3D" id="3.30.70.360">
    <property type="match status" value="1"/>
</dbReference>
<dbReference type="Gene3D" id="3.40.630.10">
    <property type="entry name" value="Zn peptidases"/>
    <property type="match status" value="2"/>
</dbReference>
<dbReference type="HAMAP" id="MF_01690">
    <property type="entry name" value="DapE"/>
    <property type="match status" value="1"/>
</dbReference>
<dbReference type="InterPro" id="IPR001261">
    <property type="entry name" value="ArgE/DapE_CS"/>
</dbReference>
<dbReference type="InterPro" id="IPR036264">
    <property type="entry name" value="Bact_exopeptidase_dim_dom"/>
</dbReference>
<dbReference type="InterPro" id="IPR005941">
    <property type="entry name" value="DapE_proteobac"/>
</dbReference>
<dbReference type="InterPro" id="IPR002933">
    <property type="entry name" value="Peptidase_M20"/>
</dbReference>
<dbReference type="InterPro" id="IPR011650">
    <property type="entry name" value="Peptidase_M20_dimer"/>
</dbReference>
<dbReference type="InterPro" id="IPR050072">
    <property type="entry name" value="Peptidase_M20A"/>
</dbReference>
<dbReference type="NCBIfam" id="TIGR01246">
    <property type="entry name" value="dapE_proteo"/>
    <property type="match status" value="1"/>
</dbReference>
<dbReference type="NCBIfam" id="NF009557">
    <property type="entry name" value="PRK13009.1"/>
    <property type="match status" value="1"/>
</dbReference>
<dbReference type="PANTHER" id="PTHR43808">
    <property type="entry name" value="ACETYLORNITHINE DEACETYLASE"/>
    <property type="match status" value="1"/>
</dbReference>
<dbReference type="PANTHER" id="PTHR43808:SF31">
    <property type="entry name" value="N-ACETYL-L-CITRULLINE DEACETYLASE"/>
    <property type="match status" value="1"/>
</dbReference>
<dbReference type="Pfam" id="PF07687">
    <property type="entry name" value="M20_dimer"/>
    <property type="match status" value="1"/>
</dbReference>
<dbReference type="Pfam" id="PF01546">
    <property type="entry name" value="Peptidase_M20"/>
    <property type="match status" value="1"/>
</dbReference>
<dbReference type="SUPFAM" id="SSF55031">
    <property type="entry name" value="Bacterial exopeptidase dimerisation domain"/>
    <property type="match status" value="1"/>
</dbReference>
<dbReference type="SUPFAM" id="SSF53187">
    <property type="entry name" value="Zn-dependent exopeptidases"/>
    <property type="match status" value="1"/>
</dbReference>
<dbReference type="PROSITE" id="PS00758">
    <property type="entry name" value="ARGE_DAPE_CPG2_1"/>
    <property type="match status" value="1"/>
</dbReference>
<dbReference type="PROSITE" id="PS00759">
    <property type="entry name" value="ARGE_DAPE_CPG2_2"/>
    <property type="match status" value="1"/>
</dbReference>
<accession>B5ZN23</accession>